<dbReference type="EC" id="7.1.1.-" evidence="1"/>
<dbReference type="EMBL" id="CP000825">
    <property type="protein sequence ID" value="ABV49934.1"/>
    <property type="molecule type" value="Genomic_DNA"/>
</dbReference>
<dbReference type="RefSeq" id="WP_012007091.1">
    <property type="nucleotide sequence ID" value="NC_009840.1"/>
</dbReference>
<dbReference type="SMR" id="A8G2V3"/>
<dbReference type="STRING" id="93060.P9215_03171"/>
<dbReference type="KEGG" id="pmh:P9215_03171"/>
<dbReference type="eggNOG" id="COG0852">
    <property type="taxonomic scope" value="Bacteria"/>
</dbReference>
<dbReference type="HOGENOM" id="CLU_042628_9_1_3"/>
<dbReference type="OrthoDB" id="9803286at2"/>
<dbReference type="Proteomes" id="UP000002014">
    <property type="component" value="Chromosome"/>
</dbReference>
<dbReference type="GO" id="GO:0031676">
    <property type="term" value="C:plasma membrane-derived thylakoid membrane"/>
    <property type="evidence" value="ECO:0007669"/>
    <property type="project" value="UniProtKB-SubCell"/>
</dbReference>
<dbReference type="GO" id="GO:0008137">
    <property type="term" value="F:NADH dehydrogenase (ubiquinone) activity"/>
    <property type="evidence" value="ECO:0007669"/>
    <property type="project" value="InterPro"/>
</dbReference>
<dbReference type="GO" id="GO:0048038">
    <property type="term" value="F:quinone binding"/>
    <property type="evidence" value="ECO:0007669"/>
    <property type="project" value="UniProtKB-KW"/>
</dbReference>
<dbReference type="GO" id="GO:0019684">
    <property type="term" value="P:photosynthesis, light reaction"/>
    <property type="evidence" value="ECO:0007669"/>
    <property type="project" value="UniProtKB-UniRule"/>
</dbReference>
<dbReference type="Gene3D" id="3.30.460.80">
    <property type="entry name" value="NADH:ubiquinone oxidoreductase, 30kDa subunit"/>
    <property type="match status" value="1"/>
</dbReference>
<dbReference type="HAMAP" id="MF_01357">
    <property type="entry name" value="NDH1_NuoC"/>
    <property type="match status" value="1"/>
</dbReference>
<dbReference type="InterPro" id="IPR010218">
    <property type="entry name" value="NADH_DH_suC"/>
</dbReference>
<dbReference type="InterPro" id="IPR037232">
    <property type="entry name" value="NADH_quin_OxRdtase_su_C/D-like"/>
</dbReference>
<dbReference type="InterPro" id="IPR001268">
    <property type="entry name" value="NADH_UbQ_OxRdtase_30kDa_su"/>
</dbReference>
<dbReference type="NCBIfam" id="NF009141">
    <property type="entry name" value="PRK12494.1"/>
    <property type="match status" value="1"/>
</dbReference>
<dbReference type="PANTHER" id="PTHR10884:SF14">
    <property type="entry name" value="NADH DEHYDROGENASE [UBIQUINONE] IRON-SULFUR PROTEIN 3, MITOCHONDRIAL"/>
    <property type="match status" value="1"/>
</dbReference>
<dbReference type="PANTHER" id="PTHR10884">
    <property type="entry name" value="NADH DEHYDROGENASE UBIQUINONE IRON-SULFUR PROTEIN 3"/>
    <property type="match status" value="1"/>
</dbReference>
<dbReference type="Pfam" id="PF00329">
    <property type="entry name" value="Complex1_30kDa"/>
    <property type="match status" value="1"/>
</dbReference>
<dbReference type="SUPFAM" id="SSF143243">
    <property type="entry name" value="Nqo5-like"/>
    <property type="match status" value="1"/>
</dbReference>
<accession>A8G2V3</accession>
<gene>
    <name evidence="1" type="primary">ndhJ</name>
    <name type="ordered locus">P9215_03171</name>
</gene>
<name>NDHJ_PROM2</name>
<evidence type="ECO:0000255" key="1">
    <source>
        <dbReference type="HAMAP-Rule" id="MF_01357"/>
    </source>
</evidence>
<evidence type="ECO:0000256" key="2">
    <source>
        <dbReference type="SAM" id="MobiDB-lite"/>
    </source>
</evidence>
<reference key="1">
    <citation type="journal article" date="2007" name="PLoS Genet.">
        <title>Patterns and implications of gene gain and loss in the evolution of Prochlorococcus.</title>
        <authorList>
            <person name="Kettler G.C."/>
            <person name="Martiny A.C."/>
            <person name="Huang K."/>
            <person name="Zucker J."/>
            <person name="Coleman M.L."/>
            <person name="Rodrigue S."/>
            <person name="Chen F."/>
            <person name="Lapidus A."/>
            <person name="Ferriera S."/>
            <person name="Johnson J."/>
            <person name="Steglich C."/>
            <person name="Church G.M."/>
            <person name="Richardson P."/>
            <person name="Chisholm S.W."/>
        </authorList>
    </citation>
    <scope>NUCLEOTIDE SEQUENCE [LARGE SCALE GENOMIC DNA]</scope>
    <source>
        <strain>MIT 9215</strain>
    </source>
</reference>
<organism>
    <name type="scientific">Prochlorococcus marinus (strain MIT 9215)</name>
    <dbReference type="NCBI Taxonomy" id="93060"/>
    <lineage>
        <taxon>Bacteria</taxon>
        <taxon>Bacillati</taxon>
        <taxon>Cyanobacteriota</taxon>
        <taxon>Cyanophyceae</taxon>
        <taxon>Synechococcales</taxon>
        <taxon>Prochlorococcaceae</taxon>
        <taxon>Prochlorococcus</taxon>
    </lineage>
</organism>
<proteinExistence type="inferred from homology"/>
<comment type="function">
    <text evidence="1">NDH-1 shuttles electrons from an unknown electron donor, via FMN and iron-sulfur (Fe-S) centers, to quinones in the respiratory and/or the photosynthetic chain. The immediate electron acceptor for the enzyme in this species is believed to be plastoquinone. Couples the redox reaction to proton translocation, and thus conserves the redox energy in a proton gradient. Cyanobacterial NDH-1 also plays a role in inorganic carbon-concentration.</text>
</comment>
<comment type="catalytic activity">
    <reaction evidence="1">
        <text>a plastoquinone + NADH + (n+1) H(+)(in) = a plastoquinol + NAD(+) + n H(+)(out)</text>
        <dbReference type="Rhea" id="RHEA:42608"/>
        <dbReference type="Rhea" id="RHEA-COMP:9561"/>
        <dbReference type="Rhea" id="RHEA-COMP:9562"/>
        <dbReference type="ChEBI" id="CHEBI:15378"/>
        <dbReference type="ChEBI" id="CHEBI:17757"/>
        <dbReference type="ChEBI" id="CHEBI:57540"/>
        <dbReference type="ChEBI" id="CHEBI:57945"/>
        <dbReference type="ChEBI" id="CHEBI:62192"/>
    </reaction>
</comment>
<comment type="catalytic activity">
    <reaction evidence="1">
        <text>a plastoquinone + NADPH + (n+1) H(+)(in) = a plastoquinol + NADP(+) + n H(+)(out)</text>
        <dbReference type="Rhea" id="RHEA:42612"/>
        <dbReference type="Rhea" id="RHEA-COMP:9561"/>
        <dbReference type="Rhea" id="RHEA-COMP:9562"/>
        <dbReference type="ChEBI" id="CHEBI:15378"/>
        <dbReference type="ChEBI" id="CHEBI:17757"/>
        <dbReference type="ChEBI" id="CHEBI:57783"/>
        <dbReference type="ChEBI" id="CHEBI:58349"/>
        <dbReference type="ChEBI" id="CHEBI:62192"/>
    </reaction>
</comment>
<comment type="subunit">
    <text evidence="1">NDH-1 can be composed of about 15 different subunits; different subcomplexes with different compositions have been identified which probably have different functions.</text>
</comment>
<comment type="subcellular location">
    <subcellularLocation>
        <location evidence="1">Cellular thylakoid membrane</location>
        <topology evidence="1">Peripheral membrane protein</topology>
        <orientation evidence="1">Cytoplasmic side</orientation>
    </subcellularLocation>
</comment>
<comment type="similarity">
    <text evidence="1">Belongs to the complex I 30 kDa subunit family.</text>
</comment>
<protein>
    <recommendedName>
        <fullName evidence="1">NAD(P)H-quinone oxidoreductase subunit J</fullName>
        <ecNumber evidence="1">7.1.1.-</ecNumber>
    </recommendedName>
    <alternativeName>
        <fullName>NAD(P)H dehydrogenase subunit J</fullName>
    </alternativeName>
    <alternativeName>
        <fullName evidence="1">NADH-plastoquinone oxidoreductase subunit J</fullName>
    </alternativeName>
    <alternativeName>
        <fullName evidence="1">NDH-1 subunit J</fullName>
        <shortName evidence="1">NDH-J</shortName>
    </alternativeName>
</protein>
<keyword id="KW-0472">Membrane</keyword>
<keyword id="KW-0520">NAD</keyword>
<keyword id="KW-0521">NADP</keyword>
<keyword id="KW-0618">Plastoquinone</keyword>
<keyword id="KW-0874">Quinone</keyword>
<keyword id="KW-0793">Thylakoid</keyword>
<keyword id="KW-1278">Translocase</keyword>
<keyword id="KW-0813">Transport</keyword>
<feature type="chain" id="PRO_0000358166" description="NAD(P)H-quinone oxidoreductase subunit J">
    <location>
        <begin position="1"/>
        <end position="176"/>
    </location>
</feature>
<feature type="region of interest" description="Disordered" evidence="2">
    <location>
        <begin position="1"/>
        <end position="32"/>
    </location>
</feature>
<feature type="compositionally biased region" description="Polar residues" evidence="2">
    <location>
        <begin position="20"/>
        <end position="32"/>
    </location>
</feature>
<sequence length="176" mass="20561">MEKEGLAKSSDTSIKKEGFISQSLSKDGIPNQSLPDDHIGIENISVEPNKLYEAVSNLRNYGFNYLQCQGGYDEGPGKNLVSFYHFITVDDFQKIEKIKEVRLKVFLKRDSDLSIPSLYKIFKGSDWQERETYDMYGINFIDHPNPTRLLMPEDWRGWPLRKDYIQPDFYELQDAY</sequence>